<dbReference type="EC" id="7.1.2.2" evidence="1"/>
<dbReference type="EMBL" id="CP000509">
    <property type="protein sequence ID" value="ABL81274.1"/>
    <property type="molecule type" value="Genomic_DNA"/>
</dbReference>
<dbReference type="RefSeq" id="WP_011755221.1">
    <property type="nucleotide sequence ID" value="NC_008699.1"/>
</dbReference>
<dbReference type="SMR" id="A1SHI9"/>
<dbReference type="STRING" id="196162.Noca_1761"/>
<dbReference type="KEGG" id="nca:Noca_1761"/>
<dbReference type="eggNOG" id="COG0056">
    <property type="taxonomic scope" value="Bacteria"/>
</dbReference>
<dbReference type="HOGENOM" id="CLU_010091_2_1_11"/>
<dbReference type="OrthoDB" id="9803053at2"/>
<dbReference type="Proteomes" id="UP000000640">
    <property type="component" value="Chromosome"/>
</dbReference>
<dbReference type="GO" id="GO:0005886">
    <property type="term" value="C:plasma membrane"/>
    <property type="evidence" value="ECO:0007669"/>
    <property type="project" value="UniProtKB-SubCell"/>
</dbReference>
<dbReference type="GO" id="GO:0045259">
    <property type="term" value="C:proton-transporting ATP synthase complex"/>
    <property type="evidence" value="ECO:0007669"/>
    <property type="project" value="UniProtKB-KW"/>
</dbReference>
<dbReference type="GO" id="GO:0043531">
    <property type="term" value="F:ADP binding"/>
    <property type="evidence" value="ECO:0007669"/>
    <property type="project" value="TreeGrafter"/>
</dbReference>
<dbReference type="GO" id="GO:0005524">
    <property type="term" value="F:ATP binding"/>
    <property type="evidence" value="ECO:0007669"/>
    <property type="project" value="UniProtKB-UniRule"/>
</dbReference>
<dbReference type="GO" id="GO:0046933">
    <property type="term" value="F:proton-transporting ATP synthase activity, rotational mechanism"/>
    <property type="evidence" value="ECO:0007669"/>
    <property type="project" value="UniProtKB-UniRule"/>
</dbReference>
<dbReference type="CDD" id="cd18113">
    <property type="entry name" value="ATP-synt_F1_alpha_C"/>
    <property type="match status" value="1"/>
</dbReference>
<dbReference type="CDD" id="cd18116">
    <property type="entry name" value="ATP-synt_F1_alpha_N"/>
    <property type="match status" value="1"/>
</dbReference>
<dbReference type="CDD" id="cd01132">
    <property type="entry name" value="F1-ATPase_alpha_CD"/>
    <property type="match status" value="1"/>
</dbReference>
<dbReference type="FunFam" id="1.20.150.20:FF:000001">
    <property type="entry name" value="ATP synthase subunit alpha"/>
    <property type="match status" value="1"/>
</dbReference>
<dbReference type="FunFam" id="3.40.50.300:FF:000002">
    <property type="entry name" value="ATP synthase subunit alpha"/>
    <property type="match status" value="1"/>
</dbReference>
<dbReference type="Gene3D" id="2.40.30.20">
    <property type="match status" value="1"/>
</dbReference>
<dbReference type="Gene3D" id="1.20.150.20">
    <property type="entry name" value="ATP synthase alpha/beta chain, C-terminal domain"/>
    <property type="match status" value="1"/>
</dbReference>
<dbReference type="Gene3D" id="3.40.50.300">
    <property type="entry name" value="P-loop containing nucleotide triphosphate hydrolases"/>
    <property type="match status" value="1"/>
</dbReference>
<dbReference type="HAMAP" id="MF_01346">
    <property type="entry name" value="ATP_synth_alpha_bact"/>
    <property type="match status" value="1"/>
</dbReference>
<dbReference type="InterPro" id="IPR023366">
    <property type="entry name" value="ATP_synth_asu-like_sf"/>
</dbReference>
<dbReference type="InterPro" id="IPR000793">
    <property type="entry name" value="ATP_synth_asu_C"/>
</dbReference>
<dbReference type="InterPro" id="IPR038376">
    <property type="entry name" value="ATP_synth_asu_C_sf"/>
</dbReference>
<dbReference type="InterPro" id="IPR033732">
    <property type="entry name" value="ATP_synth_F1_a_nt-bd_dom"/>
</dbReference>
<dbReference type="InterPro" id="IPR005294">
    <property type="entry name" value="ATP_synth_F1_asu"/>
</dbReference>
<dbReference type="InterPro" id="IPR020003">
    <property type="entry name" value="ATPase_a/bsu_AS"/>
</dbReference>
<dbReference type="InterPro" id="IPR004100">
    <property type="entry name" value="ATPase_F1/V1/A1_a/bsu_N"/>
</dbReference>
<dbReference type="InterPro" id="IPR036121">
    <property type="entry name" value="ATPase_F1/V1/A1_a/bsu_N_sf"/>
</dbReference>
<dbReference type="InterPro" id="IPR000194">
    <property type="entry name" value="ATPase_F1/V1/A1_a/bsu_nucl-bd"/>
</dbReference>
<dbReference type="InterPro" id="IPR027417">
    <property type="entry name" value="P-loop_NTPase"/>
</dbReference>
<dbReference type="NCBIfam" id="TIGR00962">
    <property type="entry name" value="atpA"/>
    <property type="match status" value="1"/>
</dbReference>
<dbReference type="NCBIfam" id="NF009884">
    <property type="entry name" value="PRK13343.1"/>
    <property type="match status" value="1"/>
</dbReference>
<dbReference type="PANTHER" id="PTHR48082">
    <property type="entry name" value="ATP SYNTHASE SUBUNIT ALPHA, MITOCHONDRIAL"/>
    <property type="match status" value="1"/>
</dbReference>
<dbReference type="PANTHER" id="PTHR48082:SF2">
    <property type="entry name" value="ATP SYNTHASE SUBUNIT ALPHA, MITOCHONDRIAL"/>
    <property type="match status" value="1"/>
</dbReference>
<dbReference type="Pfam" id="PF00006">
    <property type="entry name" value="ATP-synt_ab"/>
    <property type="match status" value="1"/>
</dbReference>
<dbReference type="Pfam" id="PF00306">
    <property type="entry name" value="ATP-synt_ab_C"/>
    <property type="match status" value="1"/>
</dbReference>
<dbReference type="Pfam" id="PF02874">
    <property type="entry name" value="ATP-synt_ab_N"/>
    <property type="match status" value="1"/>
</dbReference>
<dbReference type="SUPFAM" id="SSF47917">
    <property type="entry name" value="C-terminal domain of alpha and beta subunits of F1 ATP synthase"/>
    <property type="match status" value="1"/>
</dbReference>
<dbReference type="SUPFAM" id="SSF50615">
    <property type="entry name" value="N-terminal domain of alpha and beta subunits of F1 ATP synthase"/>
    <property type="match status" value="1"/>
</dbReference>
<dbReference type="SUPFAM" id="SSF52540">
    <property type="entry name" value="P-loop containing nucleoside triphosphate hydrolases"/>
    <property type="match status" value="1"/>
</dbReference>
<dbReference type="PROSITE" id="PS00152">
    <property type="entry name" value="ATPASE_ALPHA_BETA"/>
    <property type="match status" value="1"/>
</dbReference>
<evidence type="ECO:0000255" key="1">
    <source>
        <dbReference type="HAMAP-Rule" id="MF_01346"/>
    </source>
</evidence>
<evidence type="ECO:0000256" key="2">
    <source>
        <dbReference type="SAM" id="MobiDB-lite"/>
    </source>
</evidence>
<keyword id="KW-0066">ATP synthesis</keyword>
<keyword id="KW-0067">ATP-binding</keyword>
<keyword id="KW-1003">Cell membrane</keyword>
<keyword id="KW-0139">CF(1)</keyword>
<keyword id="KW-0375">Hydrogen ion transport</keyword>
<keyword id="KW-0406">Ion transport</keyword>
<keyword id="KW-0472">Membrane</keyword>
<keyword id="KW-0547">Nucleotide-binding</keyword>
<keyword id="KW-1185">Reference proteome</keyword>
<keyword id="KW-1278">Translocase</keyword>
<keyword id="KW-0813">Transport</keyword>
<name>ATPA_NOCSJ</name>
<gene>
    <name evidence="1" type="primary">atpA</name>
    <name type="ordered locus">Noca_1761</name>
</gene>
<comment type="function">
    <text evidence="1">Produces ATP from ADP in the presence of a proton gradient across the membrane. The alpha chain is a regulatory subunit.</text>
</comment>
<comment type="catalytic activity">
    <reaction evidence="1">
        <text>ATP + H2O + 4 H(+)(in) = ADP + phosphate + 5 H(+)(out)</text>
        <dbReference type="Rhea" id="RHEA:57720"/>
        <dbReference type="ChEBI" id="CHEBI:15377"/>
        <dbReference type="ChEBI" id="CHEBI:15378"/>
        <dbReference type="ChEBI" id="CHEBI:30616"/>
        <dbReference type="ChEBI" id="CHEBI:43474"/>
        <dbReference type="ChEBI" id="CHEBI:456216"/>
        <dbReference type="EC" id="7.1.2.2"/>
    </reaction>
</comment>
<comment type="subunit">
    <text evidence="1">F-type ATPases have 2 components, CF(1) - the catalytic core - and CF(0) - the membrane proton channel. CF(1) has five subunits: alpha(3), beta(3), gamma(1), delta(1), epsilon(1). CF(0) has three main subunits: a(1), b(2) and c(9-12). The alpha and beta chains form an alternating ring which encloses part of the gamma chain. CF(1) is attached to CF(0) by a central stalk formed by the gamma and epsilon chains, while a peripheral stalk is formed by the delta and b chains.</text>
</comment>
<comment type="subcellular location">
    <subcellularLocation>
        <location evidence="1">Cell membrane</location>
        <topology evidence="1">Peripheral membrane protein</topology>
    </subcellularLocation>
</comment>
<comment type="similarity">
    <text evidence="1">Belongs to the ATPase alpha/beta chains family.</text>
</comment>
<proteinExistence type="inferred from homology"/>
<reference key="1">
    <citation type="submission" date="2006-12" db="EMBL/GenBank/DDBJ databases">
        <title>Complete sequence of chromosome 1 of Nocardioides sp. JS614.</title>
        <authorList>
            <person name="Copeland A."/>
            <person name="Lucas S."/>
            <person name="Lapidus A."/>
            <person name="Barry K."/>
            <person name="Detter J.C."/>
            <person name="Glavina del Rio T."/>
            <person name="Hammon N."/>
            <person name="Israni S."/>
            <person name="Dalin E."/>
            <person name="Tice H."/>
            <person name="Pitluck S."/>
            <person name="Thompson L.S."/>
            <person name="Brettin T."/>
            <person name="Bruce D."/>
            <person name="Han C."/>
            <person name="Tapia R."/>
            <person name="Schmutz J."/>
            <person name="Larimer F."/>
            <person name="Land M."/>
            <person name="Hauser L."/>
            <person name="Kyrpides N."/>
            <person name="Kim E."/>
            <person name="Mattes T."/>
            <person name="Gossett J."/>
            <person name="Richardson P."/>
        </authorList>
    </citation>
    <scope>NUCLEOTIDE SEQUENCE [LARGE SCALE GENOMIC DNA]</scope>
    <source>
        <strain>ATCC BAA-499 / JS614</strain>
    </source>
</reference>
<protein>
    <recommendedName>
        <fullName evidence="1">ATP synthase subunit alpha</fullName>
        <ecNumber evidence="1">7.1.2.2</ecNumber>
    </recommendedName>
    <alternativeName>
        <fullName evidence="1">ATP synthase F1 sector subunit alpha</fullName>
    </alternativeName>
    <alternativeName>
        <fullName evidence="1">F-ATPase subunit alpha</fullName>
    </alternativeName>
</protein>
<feature type="chain" id="PRO_0000302677" description="ATP synthase subunit alpha">
    <location>
        <begin position="1"/>
        <end position="547"/>
    </location>
</feature>
<feature type="region of interest" description="Disordered" evidence="2">
    <location>
        <begin position="526"/>
        <end position="547"/>
    </location>
</feature>
<feature type="compositionally biased region" description="Acidic residues" evidence="2">
    <location>
        <begin position="528"/>
        <end position="538"/>
    </location>
</feature>
<feature type="binding site" evidence="1">
    <location>
        <begin position="173"/>
        <end position="180"/>
    </location>
    <ligand>
        <name>ATP</name>
        <dbReference type="ChEBI" id="CHEBI:30616"/>
    </ligand>
</feature>
<feature type="site" description="Required for activity" evidence="1">
    <location>
        <position position="374"/>
    </location>
</feature>
<accession>A1SHI9</accession>
<sequence>MTELSIRPDEIRDALQRFVSEYQPDAASKEEVGTVAQAGDGIARVSGLPSAMANELLEFEDGTMGLALNLDTREIGVVILGDFEGIEEGQTVRRTGEILSVPVGDNFMGRVVDPLGKPIDGLGEIEAETRRALELQAPTVMQRKSVHEPLATGIKAIDSMTPIGRGQRQLIIGDRATGKTTIAIDTIINQKQNWESGDPAKQVRCIYVAIGQKGSTIASVRGALEEAGALEYTTIVASPASDSAGFKYLAPYTGSAIGQHWMYDGKHVLIIFDDLTKQAEAYRAVSLLLRRPPGREAYPGDVFYLHSRLLERCAKLSDDMGAGSMTGLPIIETKANDVSAYIPTNVISITDGQIFLQSDLFASNQRPAIDVGVSVSRVGGSAMTKAMKAVTGSLKVDLAQFRAMEAFAMFASDLDAASRQQLDRGQRLMALLKQPAYSPYPVEEMTVSLWLGTSGRLDKVPTEDVLRFEREFLDFLRRSHEGILSAIRETLKFEDDTESSLEDAYNSFLDQFQTSEGGSIKVGHEPEAEALADEDVEQEQIVRQKRG</sequence>
<organism>
    <name type="scientific">Nocardioides sp. (strain ATCC BAA-499 / JS614)</name>
    <dbReference type="NCBI Taxonomy" id="196162"/>
    <lineage>
        <taxon>Bacteria</taxon>
        <taxon>Bacillati</taxon>
        <taxon>Actinomycetota</taxon>
        <taxon>Actinomycetes</taxon>
        <taxon>Propionibacteriales</taxon>
        <taxon>Nocardioidaceae</taxon>
        <taxon>Nocardioides</taxon>
    </lineage>
</organism>